<organism>
    <name type="scientific">Lachancea thermotolerans (strain ATCC 56472 / CBS 6340 / NRRL Y-8284)</name>
    <name type="common">Yeast</name>
    <name type="synonym">Kluyveromyces thermotolerans</name>
    <dbReference type="NCBI Taxonomy" id="559295"/>
    <lineage>
        <taxon>Eukaryota</taxon>
        <taxon>Fungi</taxon>
        <taxon>Dikarya</taxon>
        <taxon>Ascomycota</taxon>
        <taxon>Saccharomycotina</taxon>
        <taxon>Saccharomycetes</taxon>
        <taxon>Saccharomycetales</taxon>
        <taxon>Saccharomycetaceae</taxon>
        <taxon>Lachancea</taxon>
    </lineage>
</organism>
<keyword id="KW-1003">Cell membrane</keyword>
<keyword id="KW-0472">Membrane</keyword>
<keyword id="KW-1185">Reference proteome</keyword>
<keyword id="KW-0728">SH3 domain</keyword>
<keyword id="KW-0346">Stress response</keyword>
<keyword id="KW-0812">Transmembrane</keyword>
<keyword id="KW-1133">Transmembrane helix</keyword>
<dbReference type="EMBL" id="CU928167">
    <property type="protein sequence ID" value="CAR22049.1"/>
    <property type="molecule type" value="Genomic_DNA"/>
</dbReference>
<dbReference type="RefSeq" id="XP_002552487.1">
    <property type="nucleotide sequence ID" value="XM_002552441.1"/>
</dbReference>
<dbReference type="SMR" id="C5DE38"/>
<dbReference type="FunCoup" id="C5DE38">
    <property type="interactions" value="221"/>
</dbReference>
<dbReference type="STRING" id="559295.C5DE38"/>
<dbReference type="GeneID" id="8291355"/>
<dbReference type="KEGG" id="lth:KLTH0C06028g"/>
<dbReference type="eggNOG" id="ENOG502QW7A">
    <property type="taxonomic scope" value="Eukaryota"/>
</dbReference>
<dbReference type="HOGENOM" id="CLU_043316_0_0_1"/>
<dbReference type="InParanoid" id="C5DE38"/>
<dbReference type="OMA" id="KNGKWWQ"/>
<dbReference type="OrthoDB" id="5983572at2759"/>
<dbReference type="Proteomes" id="UP000002036">
    <property type="component" value="Chromosome C"/>
</dbReference>
<dbReference type="GO" id="GO:0005886">
    <property type="term" value="C:plasma membrane"/>
    <property type="evidence" value="ECO:0007669"/>
    <property type="project" value="UniProtKB-SubCell"/>
</dbReference>
<dbReference type="GO" id="GO:0030833">
    <property type="term" value="P:regulation of actin filament polymerization"/>
    <property type="evidence" value="ECO:0007669"/>
    <property type="project" value="TreeGrafter"/>
</dbReference>
<dbReference type="CDD" id="cd11855">
    <property type="entry name" value="SH3_Sho1p"/>
    <property type="match status" value="1"/>
</dbReference>
<dbReference type="FunFam" id="2.30.30.40:FF:000213">
    <property type="entry name" value="High osmolarity signaling protein SHO1"/>
    <property type="match status" value="1"/>
</dbReference>
<dbReference type="Gene3D" id="2.30.30.40">
    <property type="entry name" value="SH3 Domains"/>
    <property type="match status" value="1"/>
</dbReference>
<dbReference type="InterPro" id="IPR036028">
    <property type="entry name" value="SH3-like_dom_sf"/>
</dbReference>
<dbReference type="InterPro" id="IPR001452">
    <property type="entry name" value="SH3_domain"/>
</dbReference>
<dbReference type="InterPro" id="IPR035522">
    <property type="entry name" value="Sho1_SH3"/>
</dbReference>
<dbReference type="PANTHER" id="PTHR15735">
    <property type="entry name" value="FCH AND DOUBLE SH3 DOMAINS PROTEIN"/>
    <property type="match status" value="1"/>
</dbReference>
<dbReference type="PANTHER" id="PTHR15735:SF20">
    <property type="entry name" value="HIGH OSMOLARITY SIGNALING PROTEIN SHO1"/>
    <property type="match status" value="1"/>
</dbReference>
<dbReference type="Pfam" id="PF00018">
    <property type="entry name" value="SH3_1"/>
    <property type="match status" value="1"/>
</dbReference>
<dbReference type="PRINTS" id="PR00452">
    <property type="entry name" value="SH3DOMAIN"/>
</dbReference>
<dbReference type="SMART" id="SM00326">
    <property type="entry name" value="SH3"/>
    <property type="match status" value="1"/>
</dbReference>
<dbReference type="SUPFAM" id="SSF50044">
    <property type="entry name" value="SH3-domain"/>
    <property type="match status" value="1"/>
</dbReference>
<dbReference type="PROSITE" id="PS50002">
    <property type="entry name" value="SH3"/>
    <property type="match status" value="1"/>
</dbReference>
<sequence length="342" mass="37549">MAVPNRVEAKQMRDHPHRIHEFRLANLVTDPFAISSLSLALIAWIIAFAGSVVAASNSKKYPAFSWWGIVYQILLMVLVLILYCYDLIDYYKSFLSGALAVAFVYTTNSAAEMLYQDGSRMGAASAGVILLSMINIIWMFYFGSDNASPSNRWIDSYSLRGIRHSVLESSIAMSSRPPLVSRNVSKYSASPQMDLYNATPAPHSQGFYPDTHSQHYVSSTALNGFENAGPPTAPALHGNMGHGNNTSTFVTDTTNGNTETTMGDTLGLYSDAGDELTSFPYVAKALYTYTADSNDAYEVSFEQGEMLRVGDIEGRWWKAKRANGETGIIPSNYVELVGENSI</sequence>
<accession>C5DE38</accession>
<gene>
    <name type="primary">SHO1</name>
    <name type="ordered locus">KLTH0C06028g</name>
</gene>
<protein>
    <recommendedName>
        <fullName>High osmolarity signaling protein SHO1</fullName>
    </recommendedName>
    <alternativeName>
        <fullName>Osmosensor SHO1</fullName>
    </alternativeName>
</protein>
<proteinExistence type="inferred from homology"/>
<evidence type="ECO:0000250" key="1"/>
<evidence type="ECO:0000255" key="2"/>
<evidence type="ECO:0000255" key="3">
    <source>
        <dbReference type="PROSITE-ProRule" id="PRU00192"/>
    </source>
</evidence>
<evidence type="ECO:0000305" key="4"/>
<reference key="1">
    <citation type="journal article" date="2009" name="Genome Res.">
        <title>Comparative genomics of protoploid Saccharomycetaceae.</title>
        <authorList>
            <consortium name="The Genolevures Consortium"/>
            <person name="Souciet J.-L."/>
            <person name="Dujon B."/>
            <person name="Gaillardin C."/>
            <person name="Johnston M."/>
            <person name="Baret P.V."/>
            <person name="Cliften P."/>
            <person name="Sherman D.J."/>
            <person name="Weissenbach J."/>
            <person name="Westhof E."/>
            <person name="Wincker P."/>
            <person name="Jubin C."/>
            <person name="Poulain J."/>
            <person name="Barbe V."/>
            <person name="Segurens B."/>
            <person name="Artiguenave F."/>
            <person name="Anthouard V."/>
            <person name="Vacherie B."/>
            <person name="Val M.-E."/>
            <person name="Fulton R.S."/>
            <person name="Minx P."/>
            <person name="Wilson R."/>
            <person name="Durrens P."/>
            <person name="Jean G."/>
            <person name="Marck C."/>
            <person name="Martin T."/>
            <person name="Nikolski M."/>
            <person name="Rolland T."/>
            <person name="Seret M.-L."/>
            <person name="Casaregola S."/>
            <person name="Despons L."/>
            <person name="Fairhead C."/>
            <person name="Fischer G."/>
            <person name="Lafontaine I."/>
            <person name="Leh V."/>
            <person name="Lemaire M."/>
            <person name="de Montigny J."/>
            <person name="Neuveglise C."/>
            <person name="Thierry A."/>
            <person name="Blanc-Lenfle I."/>
            <person name="Bleykasten C."/>
            <person name="Diffels J."/>
            <person name="Fritsch E."/>
            <person name="Frangeul L."/>
            <person name="Goeffon A."/>
            <person name="Jauniaux N."/>
            <person name="Kachouri-Lafond R."/>
            <person name="Payen C."/>
            <person name="Potier S."/>
            <person name="Pribylova L."/>
            <person name="Ozanne C."/>
            <person name="Richard G.-F."/>
            <person name="Sacerdot C."/>
            <person name="Straub M.-L."/>
            <person name="Talla E."/>
        </authorList>
    </citation>
    <scope>NUCLEOTIDE SEQUENCE [LARGE SCALE GENOMIC DNA]</scope>
    <source>
        <strain>ATCC 56472 / CBS 6340 / NRRL Y-8284</strain>
    </source>
</reference>
<feature type="chain" id="PRO_0000410379" description="High osmolarity signaling protein SHO1">
    <location>
        <begin position="1"/>
        <end position="342"/>
    </location>
</feature>
<feature type="topological domain" description="Cytoplasmic" evidence="2">
    <location>
        <begin position="1"/>
        <end position="31"/>
    </location>
</feature>
<feature type="transmembrane region" description="Helical" evidence="2">
    <location>
        <begin position="32"/>
        <end position="52"/>
    </location>
</feature>
<feature type="topological domain" description="Extracellular" evidence="2">
    <location>
        <begin position="53"/>
        <end position="62"/>
    </location>
</feature>
<feature type="transmembrane region" description="Helical" evidence="2">
    <location>
        <begin position="63"/>
        <end position="83"/>
    </location>
</feature>
<feature type="topological domain" description="Cytoplasmic" evidence="2">
    <location>
        <begin position="84"/>
        <end position="93"/>
    </location>
</feature>
<feature type="transmembrane region" description="Helical" evidence="2">
    <location>
        <begin position="94"/>
        <end position="114"/>
    </location>
</feature>
<feature type="topological domain" description="Extracellular" evidence="2">
    <location>
        <begin position="115"/>
        <end position="121"/>
    </location>
</feature>
<feature type="transmembrane region" description="Helical" evidence="2">
    <location>
        <begin position="122"/>
        <end position="142"/>
    </location>
</feature>
<feature type="topological domain" description="Cytoplasmic" evidence="2">
    <location>
        <begin position="143"/>
        <end position="342"/>
    </location>
</feature>
<feature type="domain" description="SH3" evidence="3">
    <location>
        <begin position="278"/>
        <end position="339"/>
    </location>
</feature>
<name>SHO1_LACTC</name>
<comment type="function">
    <text evidence="1">Plasma membrane osmosensor that activates the high osmolarity glycerol (HOG) MAPK signaling pathway in response to high osmolarity.</text>
</comment>
<comment type="subunit">
    <text evidence="1">Forms homooligomers.</text>
</comment>
<comment type="subcellular location">
    <subcellularLocation>
        <location evidence="1">Cell membrane</location>
        <topology evidence="1">Multi-pass membrane protein</topology>
    </subcellularLocation>
</comment>
<comment type="similarity">
    <text evidence="4">Belongs to the SHO1 family.</text>
</comment>